<proteinExistence type="inferred from homology"/>
<feature type="chain" id="PRO_1000019769" description="Serine--tRNA ligase">
    <location>
        <begin position="1"/>
        <end position="426"/>
    </location>
</feature>
<feature type="binding site" evidence="1">
    <location>
        <begin position="233"/>
        <end position="235"/>
    </location>
    <ligand>
        <name>L-serine</name>
        <dbReference type="ChEBI" id="CHEBI:33384"/>
    </ligand>
</feature>
<feature type="binding site" evidence="1">
    <location>
        <begin position="264"/>
        <end position="266"/>
    </location>
    <ligand>
        <name>ATP</name>
        <dbReference type="ChEBI" id="CHEBI:30616"/>
    </ligand>
</feature>
<feature type="binding site" evidence="1">
    <location>
        <position position="287"/>
    </location>
    <ligand>
        <name>L-serine</name>
        <dbReference type="ChEBI" id="CHEBI:33384"/>
    </ligand>
</feature>
<feature type="binding site" evidence="1">
    <location>
        <begin position="351"/>
        <end position="354"/>
    </location>
    <ligand>
        <name>ATP</name>
        <dbReference type="ChEBI" id="CHEBI:30616"/>
    </ligand>
</feature>
<feature type="binding site" evidence="1">
    <location>
        <position position="386"/>
    </location>
    <ligand>
        <name>L-serine</name>
        <dbReference type="ChEBI" id="CHEBI:33384"/>
    </ligand>
</feature>
<organism>
    <name type="scientific">Prochlorococcus marinus (strain NATL2A)</name>
    <dbReference type="NCBI Taxonomy" id="59920"/>
    <lineage>
        <taxon>Bacteria</taxon>
        <taxon>Bacillati</taxon>
        <taxon>Cyanobacteriota</taxon>
        <taxon>Cyanophyceae</taxon>
        <taxon>Synechococcales</taxon>
        <taxon>Prochlorococcaceae</taxon>
        <taxon>Prochlorococcus</taxon>
    </lineage>
</organism>
<reference key="1">
    <citation type="journal article" date="2007" name="PLoS Genet.">
        <title>Patterns and implications of gene gain and loss in the evolution of Prochlorococcus.</title>
        <authorList>
            <person name="Kettler G.C."/>
            <person name="Martiny A.C."/>
            <person name="Huang K."/>
            <person name="Zucker J."/>
            <person name="Coleman M.L."/>
            <person name="Rodrigue S."/>
            <person name="Chen F."/>
            <person name="Lapidus A."/>
            <person name="Ferriera S."/>
            <person name="Johnson J."/>
            <person name="Steglich C."/>
            <person name="Church G.M."/>
            <person name="Richardson P."/>
            <person name="Chisholm S.W."/>
        </authorList>
    </citation>
    <scope>NUCLEOTIDE SEQUENCE [LARGE SCALE GENOMIC DNA]</scope>
    <source>
        <strain>NATL2A</strain>
    </source>
</reference>
<accession>Q46JN0</accession>
<comment type="function">
    <text evidence="1">Catalyzes the attachment of serine to tRNA(Ser). Is also able to aminoacylate tRNA(Sec) with serine, to form the misacylated tRNA L-seryl-tRNA(Sec), which will be further converted into selenocysteinyl-tRNA(Sec).</text>
</comment>
<comment type="catalytic activity">
    <reaction evidence="1">
        <text>tRNA(Ser) + L-serine + ATP = L-seryl-tRNA(Ser) + AMP + diphosphate + H(+)</text>
        <dbReference type="Rhea" id="RHEA:12292"/>
        <dbReference type="Rhea" id="RHEA-COMP:9669"/>
        <dbReference type="Rhea" id="RHEA-COMP:9703"/>
        <dbReference type="ChEBI" id="CHEBI:15378"/>
        <dbReference type="ChEBI" id="CHEBI:30616"/>
        <dbReference type="ChEBI" id="CHEBI:33019"/>
        <dbReference type="ChEBI" id="CHEBI:33384"/>
        <dbReference type="ChEBI" id="CHEBI:78442"/>
        <dbReference type="ChEBI" id="CHEBI:78533"/>
        <dbReference type="ChEBI" id="CHEBI:456215"/>
        <dbReference type="EC" id="6.1.1.11"/>
    </reaction>
</comment>
<comment type="catalytic activity">
    <reaction evidence="1">
        <text>tRNA(Sec) + L-serine + ATP = L-seryl-tRNA(Sec) + AMP + diphosphate + H(+)</text>
        <dbReference type="Rhea" id="RHEA:42580"/>
        <dbReference type="Rhea" id="RHEA-COMP:9742"/>
        <dbReference type="Rhea" id="RHEA-COMP:10128"/>
        <dbReference type="ChEBI" id="CHEBI:15378"/>
        <dbReference type="ChEBI" id="CHEBI:30616"/>
        <dbReference type="ChEBI" id="CHEBI:33019"/>
        <dbReference type="ChEBI" id="CHEBI:33384"/>
        <dbReference type="ChEBI" id="CHEBI:78442"/>
        <dbReference type="ChEBI" id="CHEBI:78533"/>
        <dbReference type="ChEBI" id="CHEBI:456215"/>
        <dbReference type="EC" id="6.1.1.11"/>
    </reaction>
</comment>
<comment type="pathway">
    <text evidence="1">Aminoacyl-tRNA biosynthesis; selenocysteinyl-tRNA(Sec) biosynthesis; L-seryl-tRNA(Sec) from L-serine and tRNA(Sec): step 1/1.</text>
</comment>
<comment type="subunit">
    <text evidence="1">Homodimer. The tRNA molecule binds across the dimer.</text>
</comment>
<comment type="subcellular location">
    <subcellularLocation>
        <location evidence="1">Cytoplasm</location>
    </subcellularLocation>
</comment>
<comment type="domain">
    <text evidence="1">Consists of two distinct domains, a catalytic core and a N-terminal extension that is involved in tRNA binding.</text>
</comment>
<comment type="similarity">
    <text evidence="1">Belongs to the class-II aminoacyl-tRNA synthetase family. Type-1 seryl-tRNA synthetase subfamily.</text>
</comment>
<name>SYS_PROMT</name>
<gene>
    <name evidence="1" type="primary">serS</name>
    <name type="ordered locus">PMN2A_0807</name>
</gene>
<dbReference type="EC" id="6.1.1.11" evidence="1"/>
<dbReference type="EMBL" id="CP000095">
    <property type="protein sequence ID" value="AAZ58298.1"/>
    <property type="molecule type" value="Genomic_DNA"/>
</dbReference>
<dbReference type="RefSeq" id="WP_011294895.1">
    <property type="nucleotide sequence ID" value="NC_007335.2"/>
</dbReference>
<dbReference type="SMR" id="Q46JN0"/>
<dbReference type="STRING" id="59920.PMN2A_0807"/>
<dbReference type="KEGG" id="pmn:PMN2A_0807"/>
<dbReference type="HOGENOM" id="CLU_023797_1_1_3"/>
<dbReference type="OrthoDB" id="9804647at2"/>
<dbReference type="PhylomeDB" id="Q46JN0"/>
<dbReference type="UniPathway" id="UPA00906">
    <property type="reaction ID" value="UER00895"/>
</dbReference>
<dbReference type="Proteomes" id="UP000002535">
    <property type="component" value="Chromosome"/>
</dbReference>
<dbReference type="GO" id="GO:0005737">
    <property type="term" value="C:cytoplasm"/>
    <property type="evidence" value="ECO:0007669"/>
    <property type="project" value="UniProtKB-SubCell"/>
</dbReference>
<dbReference type="GO" id="GO:0005524">
    <property type="term" value="F:ATP binding"/>
    <property type="evidence" value="ECO:0007669"/>
    <property type="project" value="UniProtKB-UniRule"/>
</dbReference>
<dbReference type="GO" id="GO:0004828">
    <property type="term" value="F:serine-tRNA ligase activity"/>
    <property type="evidence" value="ECO:0007669"/>
    <property type="project" value="UniProtKB-UniRule"/>
</dbReference>
<dbReference type="GO" id="GO:0016260">
    <property type="term" value="P:selenocysteine biosynthetic process"/>
    <property type="evidence" value="ECO:0007669"/>
    <property type="project" value="UniProtKB-UniRule"/>
</dbReference>
<dbReference type="GO" id="GO:0006434">
    <property type="term" value="P:seryl-tRNA aminoacylation"/>
    <property type="evidence" value="ECO:0007669"/>
    <property type="project" value="UniProtKB-UniRule"/>
</dbReference>
<dbReference type="CDD" id="cd00770">
    <property type="entry name" value="SerRS_core"/>
    <property type="match status" value="1"/>
</dbReference>
<dbReference type="Gene3D" id="3.30.930.10">
    <property type="entry name" value="Bira Bifunctional Protein, Domain 2"/>
    <property type="match status" value="1"/>
</dbReference>
<dbReference type="Gene3D" id="1.10.287.40">
    <property type="entry name" value="Serine-tRNA synthetase, tRNA binding domain"/>
    <property type="match status" value="1"/>
</dbReference>
<dbReference type="HAMAP" id="MF_00176">
    <property type="entry name" value="Ser_tRNA_synth_type1"/>
    <property type="match status" value="1"/>
</dbReference>
<dbReference type="InterPro" id="IPR002314">
    <property type="entry name" value="aa-tRNA-synt_IIb"/>
</dbReference>
<dbReference type="InterPro" id="IPR006195">
    <property type="entry name" value="aa-tRNA-synth_II"/>
</dbReference>
<dbReference type="InterPro" id="IPR045864">
    <property type="entry name" value="aa-tRNA-synth_II/BPL/LPL"/>
</dbReference>
<dbReference type="InterPro" id="IPR002317">
    <property type="entry name" value="Ser-tRNA-ligase_type_1"/>
</dbReference>
<dbReference type="InterPro" id="IPR015866">
    <property type="entry name" value="Ser-tRNA-synth_1_N"/>
</dbReference>
<dbReference type="InterPro" id="IPR042103">
    <property type="entry name" value="SerRS_1_N_sf"/>
</dbReference>
<dbReference type="InterPro" id="IPR033729">
    <property type="entry name" value="SerRS_core"/>
</dbReference>
<dbReference type="InterPro" id="IPR010978">
    <property type="entry name" value="tRNA-bd_arm"/>
</dbReference>
<dbReference type="NCBIfam" id="TIGR00414">
    <property type="entry name" value="serS"/>
    <property type="match status" value="1"/>
</dbReference>
<dbReference type="PANTHER" id="PTHR43697:SF1">
    <property type="entry name" value="SERINE--TRNA LIGASE"/>
    <property type="match status" value="1"/>
</dbReference>
<dbReference type="PANTHER" id="PTHR43697">
    <property type="entry name" value="SERYL-TRNA SYNTHETASE"/>
    <property type="match status" value="1"/>
</dbReference>
<dbReference type="Pfam" id="PF02403">
    <property type="entry name" value="Seryl_tRNA_N"/>
    <property type="match status" value="1"/>
</dbReference>
<dbReference type="Pfam" id="PF00587">
    <property type="entry name" value="tRNA-synt_2b"/>
    <property type="match status" value="1"/>
</dbReference>
<dbReference type="PIRSF" id="PIRSF001529">
    <property type="entry name" value="Ser-tRNA-synth_IIa"/>
    <property type="match status" value="1"/>
</dbReference>
<dbReference type="PRINTS" id="PR00981">
    <property type="entry name" value="TRNASYNTHSER"/>
</dbReference>
<dbReference type="SUPFAM" id="SSF55681">
    <property type="entry name" value="Class II aaRS and biotin synthetases"/>
    <property type="match status" value="1"/>
</dbReference>
<dbReference type="SUPFAM" id="SSF46589">
    <property type="entry name" value="tRNA-binding arm"/>
    <property type="match status" value="1"/>
</dbReference>
<dbReference type="PROSITE" id="PS50862">
    <property type="entry name" value="AA_TRNA_LIGASE_II"/>
    <property type="match status" value="1"/>
</dbReference>
<evidence type="ECO:0000255" key="1">
    <source>
        <dbReference type="HAMAP-Rule" id="MF_00176"/>
    </source>
</evidence>
<sequence length="426" mass="48111">MIDQRLLRENPNLISEGLKSRGMDVDLGPLQKFCKDLKELEEKRNSLQAQGNSIGKEVGQKIKQGLPHDSEEISNLRVKGNQIKKQVGIIEEEEKSISNKLNEQILCLPNLPEKNSLEGKNEKDNKELRRWGEPISGNTLKEHWEIANQLNLWDSERSSVIAKSRFVTLFKHAAKLERSLINFMLDLHIKKGYLEVLPPALVNTASLTGSGQLPKFAEESFRCADDDLWLTPTAEVPITSLHRGEIIPRDLLPLRYVAYSPCFRREAGSYGRDTRGLIRLHQFNKVELYWFSTPERSEDALEQITSDAESVLQELELPYRVIQLCTGDLGFSAKKTYDLEVWLPGANTFREISSCSNCGDFQARRSSIRTKDNNKKNILLHTLNGSGLAIGRTMAAILENGQQSDGSINLPKALIPYFGSNKLKPE</sequence>
<protein>
    <recommendedName>
        <fullName evidence="1">Serine--tRNA ligase</fullName>
        <ecNumber evidence="1">6.1.1.11</ecNumber>
    </recommendedName>
    <alternativeName>
        <fullName evidence="1">Seryl-tRNA synthetase</fullName>
        <shortName evidence="1">SerRS</shortName>
    </alternativeName>
    <alternativeName>
        <fullName evidence="1">Seryl-tRNA(Ser/Sec) synthetase</fullName>
    </alternativeName>
</protein>
<keyword id="KW-0030">Aminoacyl-tRNA synthetase</keyword>
<keyword id="KW-0067">ATP-binding</keyword>
<keyword id="KW-0963">Cytoplasm</keyword>
<keyword id="KW-0436">Ligase</keyword>
<keyword id="KW-0547">Nucleotide-binding</keyword>
<keyword id="KW-0648">Protein biosynthesis</keyword>
<keyword id="KW-1185">Reference proteome</keyword>